<feature type="chain" id="PRO_1000204420" description="Adenylate kinase">
    <location>
        <begin position="1"/>
        <end position="205"/>
    </location>
</feature>
<feature type="region of interest" description="NMP" evidence="1">
    <location>
        <begin position="31"/>
        <end position="60"/>
    </location>
</feature>
<feature type="region of interest" description="LID" evidence="1">
    <location>
        <begin position="127"/>
        <end position="137"/>
    </location>
</feature>
<feature type="binding site" evidence="1">
    <location>
        <begin position="11"/>
        <end position="16"/>
    </location>
    <ligand>
        <name>ATP</name>
        <dbReference type="ChEBI" id="CHEBI:30616"/>
    </ligand>
</feature>
<feature type="binding site" evidence="1">
    <location>
        <position position="32"/>
    </location>
    <ligand>
        <name>AMP</name>
        <dbReference type="ChEBI" id="CHEBI:456215"/>
    </ligand>
</feature>
<feature type="binding site" evidence="1">
    <location>
        <position position="37"/>
    </location>
    <ligand>
        <name>AMP</name>
        <dbReference type="ChEBI" id="CHEBI:456215"/>
    </ligand>
</feature>
<feature type="binding site" evidence="1">
    <location>
        <begin position="58"/>
        <end position="60"/>
    </location>
    <ligand>
        <name>AMP</name>
        <dbReference type="ChEBI" id="CHEBI:456215"/>
    </ligand>
</feature>
<feature type="binding site" evidence="1">
    <location>
        <begin position="86"/>
        <end position="89"/>
    </location>
    <ligand>
        <name>AMP</name>
        <dbReference type="ChEBI" id="CHEBI:456215"/>
    </ligand>
</feature>
<feature type="binding site" evidence="1">
    <location>
        <position position="93"/>
    </location>
    <ligand>
        <name>AMP</name>
        <dbReference type="ChEBI" id="CHEBI:456215"/>
    </ligand>
</feature>
<feature type="binding site" evidence="1">
    <location>
        <position position="128"/>
    </location>
    <ligand>
        <name>ATP</name>
        <dbReference type="ChEBI" id="CHEBI:30616"/>
    </ligand>
</feature>
<feature type="binding site" evidence="1">
    <location>
        <position position="134"/>
    </location>
    <ligand>
        <name>AMP</name>
        <dbReference type="ChEBI" id="CHEBI:456215"/>
    </ligand>
</feature>
<feature type="binding site" evidence="1">
    <location>
        <position position="145"/>
    </location>
    <ligand>
        <name>AMP</name>
        <dbReference type="ChEBI" id="CHEBI:456215"/>
    </ligand>
</feature>
<feature type="binding site" evidence="1">
    <location>
        <position position="173"/>
    </location>
    <ligand>
        <name>ATP</name>
        <dbReference type="ChEBI" id="CHEBI:30616"/>
    </ligand>
</feature>
<accession>C5CC42</accession>
<dbReference type="EC" id="2.7.4.3" evidence="1"/>
<dbReference type="EMBL" id="CP001628">
    <property type="protein sequence ID" value="ACS31183.1"/>
    <property type="molecule type" value="Genomic_DNA"/>
</dbReference>
<dbReference type="RefSeq" id="WP_010080395.1">
    <property type="nucleotide sequence ID" value="NC_012803.1"/>
</dbReference>
<dbReference type="SMR" id="C5CC42"/>
<dbReference type="STRING" id="465515.Mlut_16960"/>
<dbReference type="EnsemblBacteria" id="ACS31183">
    <property type="protein sequence ID" value="ACS31183"/>
    <property type="gene ID" value="Mlut_16960"/>
</dbReference>
<dbReference type="GeneID" id="93343563"/>
<dbReference type="KEGG" id="mlu:Mlut_16960"/>
<dbReference type="eggNOG" id="COG0563">
    <property type="taxonomic scope" value="Bacteria"/>
</dbReference>
<dbReference type="HOGENOM" id="CLU_032354_4_1_11"/>
<dbReference type="UniPathway" id="UPA00588">
    <property type="reaction ID" value="UER00649"/>
</dbReference>
<dbReference type="Proteomes" id="UP000000738">
    <property type="component" value="Chromosome"/>
</dbReference>
<dbReference type="GO" id="GO:0005737">
    <property type="term" value="C:cytoplasm"/>
    <property type="evidence" value="ECO:0007669"/>
    <property type="project" value="UniProtKB-SubCell"/>
</dbReference>
<dbReference type="GO" id="GO:0004017">
    <property type="term" value="F:adenylate kinase activity"/>
    <property type="evidence" value="ECO:0007669"/>
    <property type="project" value="UniProtKB-UniRule"/>
</dbReference>
<dbReference type="GO" id="GO:0005524">
    <property type="term" value="F:ATP binding"/>
    <property type="evidence" value="ECO:0007669"/>
    <property type="project" value="UniProtKB-UniRule"/>
</dbReference>
<dbReference type="GO" id="GO:0044209">
    <property type="term" value="P:AMP salvage"/>
    <property type="evidence" value="ECO:0007669"/>
    <property type="project" value="UniProtKB-UniRule"/>
</dbReference>
<dbReference type="CDD" id="cd01428">
    <property type="entry name" value="ADK"/>
    <property type="match status" value="1"/>
</dbReference>
<dbReference type="Gene3D" id="3.40.50.300">
    <property type="entry name" value="P-loop containing nucleotide triphosphate hydrolases"/>
    <property type="match status" value="1"/>
</dbReference>
<dbReference type="HAMAP" id="MF_00235">
    <property type="entry name" value="Adenylate_kinase_Adk"/>
    <property type="match status" value="1"/>
</dbReference>
<dbReference type="InterPro" id="IPR006259">
    <property type="entry name" value="Adenyl_kin_sub"/>
</dbReference>
<dbReference type="InterPro" id="IPR000850">
    <property type="entry name" value="Adenylat/UMP-CMP_kin"/>
</dbReference>
<dbReference type="InterPro" id="IPR033690">
    <property type="entry name" value="Adenylat_kinase_CS"/>
</dbReference>
<dbReference type="InterPro" id="IPR027417">
    <property type="entry name" value="P-loop_NTPase"/>
</dbReference>
<dbReference type="NCBIfam" id="TIGR01351">
    <property type="entry name" value="adk"/>
    <property type="match status" value="1"/>
</dbReference>
<dbReference type="NCBIfam" id="NF001381">
    <property type="entry name" value="PRK00279.1-3"/>
    <property type="match status" value="1"/>
</dbReference>
<dbReference type="NCBIfam" id="NF011100">
    <property type="entry name" value="PRK14527.1"/>
    <property type="match status" value="1"/>
</dbReference>
<dbReference type="NCBIfam" id="NF011101">
    <property type="entry name" value="PRK14528.1"/>
    <property type="match status" value="1"/>
</dbReference>
<dbReference type="NCBIfam" id="NF011104">
    <property type="entry name" value="PRK14531.1"/>
    <property type="match status" value="1"/>
</dbReference>
<dbReference type="NCBIfam" id="NF011105">
    <property type="entry name" value="PRK14532.1"/>
    <property type="match status" value="1"/>
</dbReference>
<dbReference type="PANTHER" id="PTHR23359">
    <property type="entry name" value="NUCLEOTIDE KINASE"/>
    <property type="match status" value="1"/>
</dbReference>
<dbReference type="Pfam" id="PF00406">
    <property type="entry name" value="ADK"/>
    <property type="match status" value="1"/>
</dbReference>
<dbReference type="PRINTS" id="PR00094">
    <property type="entry name" value="ADENYLTKNASE"/>
</dbReference>
<dbReference type="SUPFAM" id="SSF52540">
    <property type="entry name" value="P-loop containing nucleoside triphosphate hydrolases"/>
    <property type="match status" value="1"/>
</dbReference>
<dbReference type="PROSITE" id="PS00113">
    <property type="entry name" value="ADENYLATE_KINASE"/>
    <property type="match status" value="1"/>
</dbReference>
<name>KAD_MICLC</name>
<proteinExistence type="inferred from homology"/>
<gene>
    <name evidence="1" type="primary">adk</name>
    <name type="ordered locus">Mlut_16960</name>
</gene>
<organism>
    <name type="scientific">Micrococcus luteus (strain ATCC 4698 / DSM 20030 / JCM 1464 / CCM 169 / CCUG 5858 / IAM 1056 / NBRC 3333 / NCIMB 9278 / NCTC 2665 / VKM Ac-2230)</name>
    <name type="common">Micrococcus lysodeikticus</name>
    <dbReference type="NCBI Taxonomy" id="465515"/>
    <lineage>
        <taxon>Bacteria</taxon>
        <taxon>Bacillati</taxon>
        <taxon>Actinomycetota</taxon>
        <taxon>Actinomycetes</taxon>
        <taxon>Micrococcales</taxon>
        <taxon>Micrococcaceae</taxon>
        <taxon>Micrococcus</taxon>
    </lineage>
</organism>
<reference key="1">
    <citation type="journal article" date="2010" name="J. Bacteriol.">
        <title>Genome sequence of the Fleming strain of Micrococcus luteus, a simple free-living actinobacterium.</title>
        <authorList>
            <person name="Young M."/>
            <person name="Artsatbanov V."/>
            <person name="Beller H.R."/>
            <person name="Chandra G."/>
            <person name="Chater K.F."/>
            <person name="Dover L.G."/>
            <person name="Goh E.B."/>
            <person name="Kahan T."/>
            <person name="Kaprelyants A.S."/>
            <person name="Kyrpides N."/>
            <person name="Lapidus A."/>
            <person name="Lowry S.R."/>
            <person name="Lykidis A."/>
            <person name="Mahillon J."/>
            <person name="Markowitz V."/>
            <person name="Mavromatis K."/>
            <person name="Mukamolova G.V."/>
            <person name="Oren A."/>
            <person name="Rokem J.S."/>
            <person name="Smith M.C."/>
            <person name="Young D.I."/>
            <person name="Greenblatt C.L."/>
        </authorList>
    </citation>
    <scope>NUCLEOTIDE SEQUENCE [LARGE SCALE GENOMIC DNA]</scope>
    <source>
        <strain>ATCC 4698 / DSM 20030 / JCM 1464 / CCM 169 / CCUG 5858 / IAM 1056 / NBRC 3333 / NCIMB 9278 / NCTC 2665 / VKM Ac-2230</strain>
    </source>
</reference>
<keyword id="KW-0067">ATP-binding</keyword>
<keyword id="KW-0963">Cytoplasm</keyword>
<keyword id="KW-0418">Kinase</keyword>
<keyword id="KW-0545">Nucleotide biosynthesis</keyword>
<keyword id="KW-0547">Nucleotide-binding</keyword>
<keyword id="KW-1185">Reference proteome</keyword>
<keyword id="KW-0808">Transferase</keyword>
<comment type="function">
    <text evidence="1">Catalyzes the reversible transfer of the terminal phosphate group between ATP and AMP. Plays an important role in cellular energy homeostasis and in adenine nucleotide metabolism.</text>
</comment>
<comment type="catalytic activity">
    <reaction evidence="1">
        <text>AMP + ATP = 2 ADP</text>
        <dbReference type="Rhea" id="RHEA:12973"/>
        <dbReference type="ChEBI" id="CHEBI:30616"/>
        <dbReference type="ChEBI" id="CHEBI:456215"/>
        <dbReference type="ChEBI" id="CHEBI:456216"/>
        <dbReference type="EC" id="2.7.4.3"/>
    </reaction>
</comment>
<comment type="pathway">
    <text evidence="1">Purine metabolism; AMP biosynthesis via salvage pathway; AMP from ADP: step 1/1.</text>
</comment>
<comment type="subunit">
    <text evidence="1">Monomer.</text>
</comment>
<comment type="subcellular location">
    <subcellularLocation>
        <location evidence="1">Cytoplasm</location>
    </subcellularLocation>
</comment>
<comment type="domain">
    <text evidence="1">Consists of three domains, a large central CORE domain and two small peripheral domains, NMPbind and LID, which undergo movements during catalysis. The LID domain closes over the site of phosphoryl transfer upon ATP binding. Assembling and dissambling the active center during each catalytic cycle provides an effective means to prevent ATP hydrolysis.</text>
</comment>
<comment type="similarity">
    <text evidence="1">Belongs to the adenylate kinase family.</text>
</comment>
<sequence>MTRMLLMGPPGSGKGTQATRIADKLGIVPISTGDIFRHNVKSMTPLGVEAKRYIDNGDFVPDEVTNRMVADRIAQADAEHGFLLDGYPRTKGQVEALDAMLAEAGQSLSAVVELEVPDEELVERLLKRAEIEGRADDTQEVIEHRLDLYHRETESVIQEYVERGIVARVDGTGQIDDVTERLLQAVYSVRSATGSLPVIQPGAES</sequence>
<protein>
    <recommendedName>
        <fullName evidence="1">Adenylate kinase</fullName>
        <shortName evidence="1">AK</shortName>
        <ecNumber evidence="1">2.7.4.3</ecNumber>
    </recommendedName>
    <alternativeName>
        <fullName evidence="1">ATP-AMP transphosphorylase</fullName>
    </alternativeName>
    <alternativeName>
        <fullName evidence="1">ATP:AMP phosphotransferase</fullName>
    </alternativeName>
    <alternativeName>
        <fullName evidence="1">Adenylate monophosphate kinase</fullName>
    </alternativeName>
</protein>
<evidence type="ECO:0000255" key="1">
    <source>
        <dbReference type="HAMAP-Rule" id="MF_00235"/>
    </source>
</evidence>